<organism>
    <name type="scientific">Tetradesmus obliquus</name>
    <name type="common">Green alga</name>
    <name type="synonym">Acutodesmus obliquus</name>
    <dbReference type="NCBI Taxonomy" id="3088"/>
    <lineage>
        <taxon>Eukaryota</taxon>
        <taxon>Viridiplantae</taxon>
        <taxon>Chlorophyta</taxon>
        <taxon>core chlorophytes</taxon>
        <taxon>Chlorophyceae</taxon>
        <taxon>CS clade</taxon>
        <taxon>Sphaeropleales</taxon>
        <taxon>Scenedesmaceae</taxon>
        <taxon>Tetradesmus</taxon>
    </lineage>
</organism>
<evidence type="ECO:0000255" key="1">
    <source>
        <dbReference type="HAMAP-Rule" id="MF_01347"/>
    </source>
</evidence>
<protein>
    <recommendedName>
        <fullName evidence="1">ATP synthase subunit beta, chloroplastic</fullName>
        <ecNumber evidence="1">7.1.2.2</ecNumber>
    </recommendedName>
    <alternativeName>
        <fullName evidence="1">ATP synthase F1 sector subunit beta</fullName>
    </alternativeName>
    <alternativeName>
        <fullName evidence="1">F-ATPase subunit beta</fullName>
    </alternativeName>
</protein>
<accession>Q1KVT0</accession>
<name>ATPB_TETOB</name>
<sequence>MSDLNTKNVGKISQIIGPVLDIAFGQGQVPNIYNALTIKAKNAAGLEMSVTCEVQQLLGDSCVRAVAMNPTDGLMRGMEVLDTGKPLNVPVGKSTLGRIFNVLGEPVDNLGPVKNEESLPIHRTAPAFVDLDTRLSIFETGIKVVDLLAPYRRGGKIGLFGGAGVGKTVLIMELINNIAKAHGGVSVFAGVGERTREGNDLYTEMKESGVIVEKNLIDSKVALVYGQMNEPPGARMRVALTALTMAEYFRDVNKQDVLFFIDNIFRFVQAGAEVSALLGRMPSAVGYQPTLATEMGALQERITSTKDGSITSIQAVYVPADDLTDPAPATTFAHLDATTVLSRGLASKGIYPAVDPLDSTSTMLQPWILGEKHYGCAQSVKRTLQRYKELQDIIAILGLDELSEEDRLVVARARKIERFLSQPFFVAEVFTGSPGKYVSLAETIEGFNKILAGELDDLPEQAFYLVGNINEALTKAASMK</sequence>
<keyword id="KW-0066">ATP synthesis</keyword>
<keyword id="KW-0067">ATP-binding</keyword>
<keyword id="KW-0139">CF(1)</keyword>
<keyword id="KW-0150">Chloroplast</keyword>
<keyword id="KW-0375">Hydrogen ion transport</keyword>
<keyword id="KW-0406">Ion transport</keyword>
<keyword id="KW-0472">Membrane</keyword>
<keyword id="KW-0547">Nucleotide-binding</keyword>
<keyword id="KW-0934">Plastid</keyword>
<keyword id="KW-0793">Thylakoid</keyword>
<keyword id="KW-1278">Translocase</keyword>
<keyword id="KW-0813">Transport</keyword>
<reference key="1">
    <citation type="journal article" date="2006" name="BMC Evol. Biol.">
        <title>The complete chloroplast genome sequence of the chlorophycean green alga Scenedesmus obliquus reveals a compact gene organization and a biased distribution of genes on the two DNA strands.</title>
        <authorList>
            <person name="de Cambiaire J.-C."/>
            <person name="Otis C."/>
            <person name="Lemieux C."/>
            <person name="Turmel M."/>
        </authorList>
    </citation>
    <scope>NUCLEOTIDE SEQUENCE [LARGE SCALE GENOMIC DNA]</scope>
    <source>
        <strain>UTEX 393</strain>
    </source>
</reference>
<comment type="function">
    <text evidence="1">Produces ATP from ADP in the presence of a proton gradient across the membrane. The catalytic sites are hosted primarily by the beta subunits.</text>
</comment>
<comment type="catalytic activity">
    <reaction evidence="1">
        <text>ATP + H2O + 4 H(+)(in) = ADP + phosphate + 5 H(+)(out)</text>
        <dbReference type="Rhea" id="RHEA:57720"/>
        <dbReference type="ChEBI" id="CHEBI:15377"/>
        <dbReference type="ChEBI" id="CHEBI:15378"/>
        <dbReference type="ChEBI" id="CHEBI:30616"/>
        <dbReference type="ChEBI" id="CHEBI:43474"/>
        <dbReference type="ChEBI" id="CHEBI:456216"/>
        <dbReference type="EC" id="7.1.2.2"/>
    </reaction>
</comment>
<comment type="subunit">
    <text evidence="1">F-type ATPases have 2 components, CF(1) - the catalytic core - and CF(0) - the membrane proton channel. CF(1) has five subunits: alpha(3), beta(3), gamma(1), delta(1), epsilon(1). CF(0) has four main subunits: a(1), b(1), b'(1) and c(9-12).</text>
</comment>
<comment type="subcellular location">
    <subcellularLocation>
        <location evidence="1">Plastid</location>
        <location evidence="1">Chloroplast thylakoid membrane</location>
        <topology evidence="1">Peripheral membrane protein</topology>
    </subcellularLocation>
</comment>
<comment type="similarity">
    <text evidence="1">Belongs to the ATPase alpha/beta chains family.</text>
</comment>
<proteinExistence type="inferred from homology"/>
<geneLocation type="chloroplast"/>
<dbReference type="EC" id="7.1.2.2" evidence="1"/>
<dbReference type="EMBL" id="DQ396875">
    <property type="protein sequence ID" value="ABD48277.1"/>
    <property type="molecule type" value="Genomic_DNA"/>
</dbReference>
<dbReference type="RefSeq" id="YP_635994.1">
    <property type="nucleotide sequence ID" value="NC_008101.1"/>
</dbReference>
<dbReference type="SMR" id="Q1KVT0"/>
<dbReference type="GeneID" id="4099783"/>
<dbReference type="GO" id="GO:0009535">
    <property type="term" value="C:chloroplast thylakoid membrane"/>
    <property type="evidence" value="ECO:0007669"/>
    <property type="project" value="UniProtKB-SubCell"/>
</dbReference>
<dbReference type="GO" id="GO:0005739">
    <property type="term" value="C:mitochondrion"/>
    <property type="evidence" value="ECO:0007669"/>
    <property type="project" value="GOC"/>
</dbReference>
<dbReference type="GO" id="GO:0045259">
    <property type="term" value="C:proton-transporting ATP synthase complex"/>
    <property type="evidence" value="ECO:0007669"/>
    <property type="project" value="UniProtKB-KW"/>
</dbReference>
<dbReference type="GO" id="GO:0005524">
    <property type="term" value="F:ATP binding"/>
    <property type="evidence" value="ECO:0007669"/>
    <property type="project" value="UniProtKB-UniRule"/>
</dbReference>
<dbReference type="GO" id="GO:0016887">
    <property type="term" value="F:ATP hydrolysis activity"/>
    <property type="evidence" value="ECO:0007669"/>
    <property type="project" value="InterPro"/>
</dbReference>
<dbReference type="GO" id="GO:0046933">
    <property type="term" value="F:proton-transporting ATP synthase activity, rotational mechanism"/>
    <property type="evidence" value="ECO:0007669"/>
    <property type="project" value="UniProtKB-UniRule"/>
</dbReference>
<dbReference type="GO" id="GO:0042776">
    <property type="term" value="P:proton motive force-driven mitochondrial ATP synthesis"/>
    <property type="evidence" value="ECO:0007669"/>
    <property type="project" value="TreeGrafter"/>
</dbReference>
<dbReference type="CDD" id="cd18110">
    <property type="entry name" value="ATP-synt_F1_beta_C"/>
    <property type="match status" value="1"/>
</dbReference>
<dbReference type="CDD" id="cd18115">
    <property type="entry name" value="ATP-synt_F1_beta_N"/>
    <property type="match status" value="1"/>
</dbReference>
<dbReference type="CDD" id="cd01133">
    <property type="entry name" value="F1-ATPase_beta_CD"/>
    <property type="match status" value="1"/>
</dbReference>
<dbReference type="FunFam" id="1.10.1140.10:FF:000001">
    <property type="entry name" value="ATP synthase subunit beta"/>
    <property type="match status" value="1"/>
</dbReference>
<dbReference type="FunFam" id="3.40.50.12240:FF:000006">
    <property type="entry name" value="ATP synthase subunit beta"/>
    <property type="match status" value="1"/>
</dbReference>
<dbReference type="FunFam" id="3.40.50.300:FF:000026">
    <property type="entry name" value="ATP synthase subunit beta"/>
    <property type="match status" value="1"/>
</dbReference>
<dbReference type="FunFam" id="2.40.10.170:FF:000002">
    <property type="entry name" value="ATP synthase subunit beta, chloroplastic"/>
    <property type="match status" value="1"/>
</dbReference>
<dbReference type="Gene3D" id="2.40.10.170">
    <property type="match status" value="1"/>
</dbReference>
<dbReference type="Gene3D" id="1.10.1140.10">
    <property type="entry name" value="Bovine Mitochondrial F1-atpase, Atp Synthase Beta Chain, Chain D, domain 3"/>
    <property type="match status" value="1"/>
</dbReference>
<dbReference type="Gene3D" id="3.40.50.300">
    <property type="entry name" value="P-loop containing nucleotide triphosphate hydrolases"/>
    <property type="match status" value="1"/>
</dbReference>
<dbReference type="HAMAP" id="MF_01347">
    <property type="entry name" value="ATP_synth_beta_bact"/>
    <property type="match status" value="1"/>
</dbReference>
<dbReference type="InterPro" id="IPR003593">
    <property type="entry name" value="AAA+_ATPase"/>
</dbReference>
<dbReference type="InterPro" id="IPR055190">
    <property type="entry name" value="ATP-synt_VA_C"/>
</dbReference>
<dbReference type="InterPro" id="IPR005722">
    <property type="entry name" value="ATP_synth_F1_bsu"/>
</dbReference>
<dbReference type="InterPro" id="IPR020003">
    <property type="entry name" value="ATPase_a/bsu_AS"/>
</dbReference>
<dbReference type="InterPro" id="IPR050053">
    <property type="entry name" value="ATPase_alpha/beta_chains"/>
</dbReference>
<dbReference type="InterPro" id="IPR004100">
    <property type="entry name" value="ATPase_F1/V1/A1_a/bsu_N"/>
</dbReference>
<dbReference type="InterPro" id="IPR036121">
    <property type="entry name" value="ATPase_F1/V1/A1_a/bsu_N_sf"/>
</dbReference>
<dbReference type="InterPro" id="IPR000194">
    <property type="entry name" value="ATPase_F1/V1/A1_a/bsu_nucl-bd"/>
</dbReference>
<dbReference type="InterPro" id="IPR024034">
    <property type="entry name" value="ATPase_F1/V1_b/a_C"/>
</dbReference>
<dbReference type="InterPro" id="IPR027417">
    <property type="entry name" value="P-loop_NTPase"/>
</dbReference>
<dbReference type="NCBIfam" id="TIGR01039">
    <property type="entry name" value="atpD"/>
    <property type="match status" value="1"/>
</dbReference>
<dbReference type="PANTHER" id="PTHR15184">
    <property type="entry name" value="ATP SYNTHASE"/>
    <property type="match status" value="1"/>
</dbReference>
<dbReference type="PANTHER" id="PTHR15184:SF71">
    <property type="entry name" value="ATP SYNTHASE SUBUNIT BETA, MITOCHONDRIAL"/>
    <property type="match status" value="1"/>
</dbReference>
<dbReference type="Pfam" id="PF00006">
    <property type="entry name" value="ATP-synt_ab"/>
    <property type="match status" value="1"/>
</dbReference>
<dbReference type="Pfam" id="PF02874">
    <property type="entry name" value="ATP-synt_ab_N"/>
    <property type="match status" value="1"/>
</dbReference>
<dbReference type="Pfam" id="PF22919">
    <property type="entry name" value="ATP-synt_VA_C"/>
    <property type="match status" value="1"/>
</dbReference>
<dbReference type="SMART" id="SM00382">
    <property type="entry name" value="AAA"/>
    <property type="match status" value="1"/>
</dbReference>
<dbReference type="SUPFAM" id="SSF47917">
    <property type="entry name" value="C-terminal domain of alpha and beta subunits of F1 ATP synthase"/>
    <property type="match status" value="1"/>
</dbReference>
<dbReference type="SUPFAM" id="SSF50615">
    <property type="entry name" value="N-terminal domain of alpha and beta subunits of F1 ATP synthase"/>
    <property type="match status" value="1"/>
</dbReference>
<dbReference type="SUPFAM" id="SSF52540">
    <property type="entry name" value="P-loop containing nucleoside triphosphate hydrolases"/>
    <property type="match status" value="1"/>
</dbReference>
<dbReference type="PROSITE" id="PS00152">
    <property type="entry name" value="ATPASE_ALPHA_BETA"/>
    <property type="match status" value="1"/>
</dbReference>
<feature type="chain" id="PRO_0000254522" description="ATP synthase subunit beta, chloroplastic">
    <location>
        <begin position="1"/>
        <end position="480"/>
    </location>
</feature>
<feature type="binding site" evidence="1">
    <location>
        <begin position="161"/>
        <end position="168"/>
    </location>
    <ligand>
        <name>ATP</name>
        <dbReference type="ChEBI" id="CHEBI:30616"/>
    </ligand>
</feature>
<gene>
    <name evidence="1" type="primary">atpB</name>
</gene>